<evidence type="ECO:0000255" key="1">
    <source>
        <dbReference type="HAMAP-Rule" id="MF_02011"/>
    </source>
</evidence>
<evidence type="ECO:0000256" key="2">
    <source>
        <dbReference type="SAM" id="MobiDB-lite"/>
    </source>
</evidence>
<keyword id="KW-0131">Cell cycle</keyword>
<keyword id="KW-0132">Cell division</keyword>
<keyword id="KW-0133">Cell shape</keyword>
<keyword id="KW-0175">Coiled coil</keyword>
<keyword id="KW-0963">Cytoplasm</keyword>
<organism>
    <name type="scientific">Streptococcus suis (strain 98HAH33)</name>
    <dbReference type="NCBI Taxonomy" id="391296"/>
    <lineage>
        <taxon>Bacteria</taxon>
        <taxon>Bacillati</taxon>
        <taxon>Bacillota</taxon>
        <taxon>Bacilli</taxon>
        <taxon>Lactobacillales</taxon>
        <taxon>Streptococcaceae</taxon>
        <taxon>Streptococcus</taxon>
    </lineage>
</organism>
<name>GPSB_STRS2</name>
<sequence length="111" mass="12867">MASIKFTTKDIFEQDFKIGFRGYDQDEVNDFLDDIMKDYDAYEAIIKELKGEIARLKAQAANSPKTTLPTEESNDVLRTERPSSATNFDILRRLNRLEKEVFGKQIVQDQE</sequence>
<accession>A4VZM2</accession>
<reference key="1">
    <citation type="journal article" date="2007" name="PLoS ONE">
        <title>A glimpse of streptococcal toxic shock syndrome from comparative genomics of S. suis 2 Chinese isolates.</title>
        <authorList>
            <person name="Chen C."/>
            <person name="Tang J."/>
            <person name="Dong W."/>
            <person name="Wang C."/>
            <person name="Feng Y."/>
            <person name="Wang J."/>
            <person name="Zheng F."/>
            <person name="Pan X."/>
            <person name="Liu D."/>
            <person name="Li M."/>
            <person name="Song Y."/>
            <person name="Zhu X."/>
            <person name="Sun H."/>
            <person name="Feng T."/>
            <person name="Guo Z."/>
            <person name="Ju A."/>
            <person name="Ge J."/>
            <person name="Dong Y."/>
            <person name="Sun W."/>
            <person name="Jiang Y."/>
            <person name="Wang J."/>
            <person name="Yan J."/>
            <person name="Yang H."/>
            <person name="Wang X."/>
            <person name="Gao G.F."/>
            <person name="Yang R."/>
            <person name="Wang J."/>
            <person name="Yu J."/>
        </authorList>
    </citation>
    <scope>NUCLEOTIDE SEQUENCE [LARGE SCALE GENOMIC DNA]</scope>
    <source>
        <strain>98HAH33</strain>
    </source>
</reference>
<gene>
    <name evidence="1" type="primary">gpsB</name>
    <name type="ordered locus">SSU98_0403</name>
</gene>
<comment type="function">
    <text evidence="1">Divisome component that associates with the complex late in its assembly, after the Z-ring is formed, and is dependent on DivIC and PBP2B for its recruitment to the divisome. Together with EzrA, is a key component of the system that regulates PBP1 localization during cell cycle progression. Its main role could be the removal of PBP1 from the cell pole after pole maturation is completed. Also contributes to the recruitment of PBP1 to the division complex. Not essential for septum formation.</text>
</comment>
<comment type="subunit">
    <text evidence="1">Forms polymers through the coiled coil domains. Interacts with PBP1, MreC and EzrA.</text>
</comment>
<comment type="subcellular location">
    <subcellularLocation>
        <location evidence="1">Cytoplasm</location>
    </subcellularLocation>
    <text evidence="1">Shuttles between the lateral wall and the division site in a cell cycle-dependent manner.</text>
</comment>
<comment type="similarity">
    <text evidence="1">Belongs to the GpsB family.</text>
</comment>
<dbReference type="EMBL" id="CP000408">
    <property type="protein sequence ID" value="ABP91561.1"/>
    <property type="molecule type" value="Genomic_DNA"/>
</dbReference>
<dbReference type="SMR" id="A4VZM2"/>
<dbReference type="KEGG" id="ssv:SSU98_0403"/>
<dbReference type="HOGENOM" id="CLU_140309_1_0_9"/>
<dbReference type="GO" id="GO:0005737">
    <property type="term" value="C:cytoplasm"/>
    <property type="evidence" value="ECO:0007669"/>
    <property type="project" value="UniProtKB-SubCell"/>
</dbReference>
<dbReference type="GO" id="GO:0051301">
    <property type="term" value="P:cell division"/>
    <property type="evidence" value="ECO:0007669"/>
    <property type="project" value="UniProtKB-UniRule"/>
</dbReference>
<dbReference type="GO" id="GO:0008360">
    <property type="term" value="P:regulation of cell shape"/>
    <property type="evidence" value="ECO:0007669"/>
    <property type="project" value="UniProtKB-UniRule"/>
</dbReference>
<dbReference type="Gene3D" id="6.10.250.660">
    <property type="match status" value="1"/>
</dbReference>
<dbReference type="HAMAP" id="MF_02011">
    <property type="entry name" value="GpsB"/>
    <property type="match status" value="1"/>
</dbReference>
<dbReference type="InterPro" id="IPR011229">
    <property type="entry name" value="Cell_cycle_GpsB"/>
</dbReference>
<dbReference type="InterPro" id="IPR019933">
    <property type="entry name" value="DivIVA_domain"/>
</dbReference>
<dbReference type="InterPro" id="IPR007793">
    <property type="entry name" value="DivIVA_fam"/>
</dbReference>
<dbReference type="NCBIfam" id="TIGR03544">
    <property type="entry name" value="DivI1A_domain"/>
    <property type="match status" value="1"/>
</dbReference>
<dbReference type="NCBIfam" id="NF010725">
    <property type="entry name" value="PRK14127.1"/>
    <property type="match status" value="1"/>
</dbReference>
<dbReference type="PANTHER" id="PTHR35794:SF1">
    <property type="entry name" value="CELL CYCLE PROTEIN GPSB"/>
    <property type="match status" value="1"/>
</dbReference>
<dbReference type="PANTHER" id="PTHR35794">
    <property type="entry name" value="CELL DIVISION PROTEIN DIVIVA"/>
    <property type="match status" value="1"/>
</dbReference>
<dbReference type="Pfam" id="PF05103">
    <property type="entry name" value="DivIVA"/>
    <property type="match status" value="1"/>
</dbReference>
<dbReference type="PIRSF" id="PIRSF029938">
    <property type="entry name" value="UCP029938"/>
    <property type="match status" value="1"/>
</dbReference>
<proteinExistence type="inferred from homology"/>
<feature type="chain" id="PRO_0000337968" description="Cell cycle protein GpsB">
    <location>
        <begin position="1"/>
        <end position="111"/>
    </location>
</feature>
<feature type="region of interest" description="Disordered" evidence="2">
    <location>
        <begin position="59"/>
        <end position="80"/>
    </location>
</feature>
<feature type="coiled-coil region" evidence="1">
    <location>
        <begin position="32"/>
        <end position="63"/>
    </location>
</feature>
<feature type="compositionally biased region" description="Polar residues" evidence="2">
    <location>
        <begin position="60"/>
        <end position="71"/>
    </location>
</feature>
<protein>
    <recommendedName>
        <fullName evidence="1">Cell cycle protein GpsB</fullName>
    </recommendedName>
    <alternativeName>
        <fullName evidence="1">Guiding PBP1-shuttling protein</fullName>
    </alternativeName>
</protein>